<feature type="chain" id="PRO_0000417919" description="Putative glycerophosphocholine phosphodiesterase GPCPD1 homolog 1" evidence="4">
    <location>
        <begin position="1"/>
        <end position="690"/>
    </location>
</feature>
<feature type="domain" description="CBM20" evidence="2">
    <location>
        <begin position="1"/>
        <end position="122"/>
    </location>
</feature>
<feature type="domain" description="GP-PDE">
    <location>
        <begin position="344"/>
        <end position="654"/>
    </location>
</feature>
<feature type="region of interest" description="Disordered" evidence="3">
    <location>
        <begin position="670"/>
        <end position="690"/>
    </location>
</feature>
<feature type="compositionally biased region" description="Low complexity" evidence="3">
    <location>
        <begin position="676"/>
        <end position="690"/>
    </location>
</feature>
<feature type="splice variant" id="VSP_043935" description="In isoform a and isoform b." evidence="4">
    <location>
        <begin position="177"/>
        <end position="202"/>
    </location>
</feature>
<feature type="splice variant" id="VSP_043938" description="In isoform b." evidence="4">
    <original>NIGQRENTIFSLNEAARRGADYVEMDVQLTKDLKTVVYHDFHVLVAVAGRDSPSSTPTAAGENKSLHEIAIKDL</original>
    <variation>FVESAGDPFLNLNSE</variation>
    <location>
        <begin position="359"/>
        <end position="432"/>
    </location>
</feature>
<feature type="splice variant" id="VSP_043939" description="In isoform b." evidence="4">
    <original>QLNLLHFE</original>
    <variation>KERTLYFP</variation>
    <location>
        <begin position="436"/>
        <end position="443"/>
    </location>
</feature>
<feature type="splice variant" id="VSP_043940" description="In isoform b." evidence="4">
    <location>
        <begin position="444"/>
        <end position="690"/>
    </location>
</feature>
<organism>
    <name type="scientific">Caenorhabditis elegans</name>
    <dbReference type="NCBI Taxonomy" id="6239"/>
    <lineage>
        <taxon>Eukaryota</taxon>
        <taxon>Metazoa</taxon>
        <taxon>Ecdysozoa</taxon>
        <taxon>Nematoda</taxon>
        <taxon>Chromadorea</taxon>
        <taxon>Rhabditida</taxon>
        <taxon>Rhabditina</taxon>
        <taxon>Rhabditomorpha</taxon>
        <taxon>Rhabditoidea</taxon>
        <taxon>Rhabditidae</taxon>
        <taxon>Peloderinae</taxon>
        <taxon>Caenorhabditis</taxon>
    </lineage>
</organism>
<sequence length="690" mass="78735">MDQDYKAHFKVFCSEVREWEKIHVVGSLPVLGEWNPRKSFPLTKSTDEENTFHAIVSVPSSIKEFNFRYIRVMYLDPSENNTSEPIMVLSKWETFNNARTCLIGVESQDGVARKNITDQFGSYSGKTQITDGWILNEKESVVYFRIHGEALKFFAKSYANKEYRLKVEPFDVRYSEMFSYTRKDITDRRGVWRHSSVYASMSIDGDDVVNLPTPSLPCFSNTDLSVLTREDPIFGDQYFNGSVFRNDQDYLVFRTRTVSLQNLAFRIEFYHGEKRCALSYVLPSSMSGTHGATVSPVIGLSSAPVGHINVNYMIVKRNKYTDQNLDIDSMKTTFGRYWRKRNRMLQIGHRGMGSSYTKNIGQRENTIFSLNEAARRGADYVEMDVQLTKDLKTVVYHDFHVLVAVAGRDSPSSTPTAAGENKSLHEIAIKDLTLAQLNLLHFEHISRANGSSAESPVALSVTPSKTETDELHVPFPSLAQVLRHVDENVGLNIEIKYPMYMQDGSHECQGYFEQNKFVDIILAEVAEHAGNRRIIFSCFEPDICTMITKKQHKYPVSFLVVGATNRYMPFQDIRSDCSKIAANFAAGCELLGVNFHSEELLIDQKPIEIAEKYGLIKFVWGDDLNSKEVQKHFRDEMNVDGLIFDRIGEDEVLKQNVFVVENHNRSSLFARSQHNSRSPSMSRRCMSTVE</sequence>
<dbReference type="EC" id="3.1.-.-"/>
<dbReference type="EMBL" id="FO080552">
    <property type="protein sequence ID" value="CCD64603.1"/>
    <property type="molecule type" value="Genomic_DNA"/>
</dbReference>
<dbReference type="EMBL" id="FO080552">
    <property type="protein sequence ID" value="CCD64604.1"/>
    <property type="molecule type" value="Genomic_DNA"/>
</dbReference>
<dbReference type="EMBL" id="FO080552">
    <property type="protein sequence ID" value="CCD64605.1"/>
    <property type="molecule type" value="Genomic_DNA"/>
</dbReference>
<dbReference type="EMBL" id="FO080552">
    <property type="protein sequence ID" value="CCD64606.1"/>
    <property type="molecule type" value="Genomic_DNA"/>
</dbReference>
<dbReference type="PIR" id="T16609">
    <property type="entry name" value="T16609"/>
</dbReference>
<dbReference type="RefSeq" id="NP_001024784.2">
    <molecule id="Q21407-2"/>
    <property type="nucleotide sequence ID" value="NM_001029613.4"/>
</dbReference>
<dbReference type="RefSeq" id="NP_001024785.2">
    <property type="nucleotide sequence ID" value="NM_001029614.3"/>
</dbReference>
<dbReference type="RefSeq" id="NP_001024786.2">
    <property type="nucleotide sequence ID" value="NM_001029615.2"/>
</dbReference>
<dbReference type="RefSeq" id="NP_001256998.1">
    <molecule id="Q21407-1"/>
    <property type="nucleotide sequence ID" value="NM_001270069.5"/>
</dbReference>
<dbReference type="RefSeq" id="NP_001367507.1">
    <molecule id="Q21407-3"/>
    <property type="nucleotide sequence ID" value="NM_001380928.3"/>
</dbReference>
<dbReference type="SMR" id="Q21407"/>
<dbReference type="FunCoup" id="Q21407">
    <property type="interactions" value="1541"/>
</dbReference>
<dbReference type="STRING" id="6239.K10B3.6d.1"/>
<dbReference type="PaxDb" id="6239-K10B3.6d.2"/>
<dbReference type="PeptideAtlas" id="Q21407"/>
<dbReference type="EnsemblMetazoa" id="K10B3.6a.1">
    <molecule id="Q21407-2"/>
    <property type="protein sequence ID" value="K10B3.6a.1"/>
    <property type="gene ID" value="WBGene00019612"/>
</dbReference>
<dbReference type="EnsemblMetazoa" id="K10B3.6b.1">
    <molecule id="Q21407-3"/>
    <property type="protein sequence ID" value="K10B3.6b.1"/>
    <property type="gene ID" value="WBGene00019612"/>
</dbReference>
<dbReference type="EnsemblMetazoa" id="K10B3.6d.1">
    <molecule id="Q21407-1"/>
    <property type="protein sequence ID" value="K10B3.6d.1"/>
    <property type="gene ID" value="WBGene00019612"/>
</dbReference>
<dbReference type="GeneID" id="180600"/>
<dbReference type="KEGG" id="cel:CELE_K10B3.6"/>
<dbReference type="UCSC" id="K10B3.6a">
    <molecule id="Q21407-1"/>
    <property type="organism name" value="c. elegans"/>
</dbReference>
<dbReference type="AGR" id="WB:WBGene00019612"/>
<dbReference type="CTD" id="180600"/>
<dbReference type="WormBase" id="K10B3.6a">
    <molecule id="Q21407-2"/>
    <property type="protein sequence ID" value="CE46326"/>
    <property type="gene ID" value="WBGene00019612"/>
    <property type="gene designation" value="gpcp-1"/>
</dbReference>
<dbReference type="WormBase" id="K10B3.6b">
    <molecule id="Q21407-3"/>
    <property type="protein sequence ID" value="CE46407"/>
    <property type="gene ID" value="WBGene00019612"/>
    <property type="gene designation" value="gpcp-1"/>
</dbReference>
<dbReference type="WormBase" id="K10B3.6d">
    <molecule id="Q21407-1"/>
    <property type="protein sequence ID" value="CE46163"/>
    <property type="gene ID" value="WBGene00019612"/>
    <property type="gene designation" value="gpcp-1"/>
</dbReference>
<dbReference type="eggNOG" id="KOG2421">
    <property type="taxonomic scope" value="Eukaryota"/>
</dbReference>
<dbReference type="InParanoid" id="Q21407"/>
<dbReference type="OMA" id="DICTMIT"/>
<dbReference type="OrthoDB" id="1058301at2759"/>
<dbReference type="PhylomeDB" id="Q21407"/>
<dbReference type="PRO" id="PR:Q21407"/>
<dbReference type="Proteomes" id="UP000001940">
    <property type="component" value="Chromosome X"/>
</dbReference>
<dbReference type="Bgee" id="WBGene00019612">
    <property type="expression patterns" value="Expressed in larva and 3 other cell types or tissues"/>
</dbReference>
<dbReference type="GO" id="GO:0047389">
    <property type="term" value="F:glycerophosphocholine phosphodiesterase activity"/>
    <property type="evidence" value="ECO:0000318"/>
    <property type="project" value="GO_Central"/>
</dbReference>
<dbReference type="GO" id="GO:2001070">
    <property type="term" value="F:starch binding"/>
    <property type="evidence" value="ECO:0007669"/>
    <property type="project" value="InterPro"/>
</dbReference>
<dbReference type="GO" id="GO:0046475">
    <property type="term" value="P:glycerophospholipid catabolic process"/>
    <property type="evidence" value="ECO:0000318"/>
    <property type="project" value="GO_Central"/>
</dbReference>
<dbReference type="CDD" id="cd05814">
    <property type="entry name" value="CBM20_Prei4"/>
    <property type="match status" value="1"/>
</dbReference>
<dbReference type="CDD" id="cd08607">
    <property type="entry name" value="GDPD_GDE5"/>
    <property type="match status" value="1"/>
</dbReference>
<dbReference type="FunFam" id="3.20.20.190:FF:000032">
    <property type="entry name" value="Glycerophosphoryl diester phosphodiesterase, putative"/>
    <property type="match status" value="1"/>
</dbReference>
<dbReference type="Gene3D" id="2.60.40.10">
    <property type="entry name" value="Immunoglobulins"/>
    <property type="match status" value="1"/>
</dbReference>
<dbReference type="Gene3D" id="3.20.20.190">
    <property type="entry name" value="Phosphatidylinositol (PI) phosphodiesterase"/>
    <property type="match status" value="1"/>
</dbReference>
<dbReference type="InterPro" id="IPR013784">
    <property type="entry name" value="Carb-bd-like_fold"/>
</dbReference>
<dbReference type="InterPro" id="IPR002044">
    <property type="entry name" value="CBM20"/>
</dbReference>
<dbReference type="InterPro" id="IPR034839">
    <property type="entry name" value="CBM20_GPCPD1"/>
</dbReference>
<dbReference type="InterPro" id="IPR051578">
    <property type="entry name" value="GDPD"/>
</dbReference>
<dbReference type="InterPro" id="IPR030395">
    <property type="entry name" value="GP_PDE_dom"/>
</dbReference>
<dbReference type="InterPro" id="IPR013783">
    <property type="entry name" value="Ig-like_fold"/>
</dbReference>
<dbReference type="InterPro" id="IPR017946">
    <property type="entry name" value="PLC-like_Pdiesterase_TIM-brl"/>
</dbReference>
<dbReference type="PANTHER" id="PTHR22958:SF1">
    <property type="entry name" value="GLYCEROPHOSPHOCHOLINE PHOSPHODIESTERASE GPCPD1"/>
    <property type="match status" value="1"/>
</dbReference>
<dbReference type="PANTHER" id="PTHR22958">
    <property type="entry name" value="GLYCEROPHOSPHORYL DIESTER PHOSPHODIESTERASE"/>
    <property type="match status" value="1"/>
</dbReference>
<dbReference type="Pfam" id="PF25329">
    <property type="entry name" value="C2_GDE1"/>
    <property type="match status" value="1"/>
</dbReference>
<dbReference type="Pfam" id="PF00686">
    <property type="entry name" value="CBM_20"/>
    <property type="match status" value="1"/>
</dbReference>
<dbReference type="Pfam" id="PF03009">
    <property type="entry name" value="GDPD"/>
    <property type="match status" value="1"/>
</dbReference>
<dbReference type="SMART" id="SM01065">
    <property type="entry name" value="CBM_2"/>
    <property type="match status" value="1"/>
</dbReference>
<dbReference type="SUPFAM" id="SSF51695">
    <property type="entry name" value="PLC-like phosphodiesterases"/>
    <property type="match status" value="1"/>
</dbReference>
<dbReference type="SUPFAM" id="SSF49452">
    <property type="entry name" value="Starch-binding domain-like"/>
    <property type="match status" value="1"/>
</dbReference>
<dbReference type="PROSITE" id="PS51166">
    <property type="entry name" value="CBM20"/>
    <property type="match status" value="1"/>
</dbReference>
<dbReference type="PROSITE" id="PS51704">
    <property type="entry name" value="GP_PDE"/>
    <property type="match status" value="1"/>
</dbReference>
<accession>Q21407</accession>
<accession>G4S033</accession>
<accession>H2KYS5</accession>
<accession>H2KYS6</accession>
<gene>
    <name evidence="5" type="primary">gpcp-1</name>
    <name evidence="5" type="ORF">K10B3.6</name>
</gene>
<reference key="1">
    <citation type="journal article" date="1998" name="Science">
        <title>Genome sequence of the nematode C. elegans: a platform for investigating biology.</title>
        <authorList>
            <consortium name="The C. elegans sequencing consortium"/>
        </authorList>
    </citation>
    <scope>NUCLEOTIDE SEQUENCE [LARGE SCALE GENOMIC DNA]</scope>
    <scope>ALTERNATIVE SPLICING</scope>
    <source>
        <strain>Bristol N2</strain>
    </source>
</reference>
<protein>
    <recommendedName>
        <fullName evidence="1">Putative glycerophosphocholine phosphodiesterase GPCPD1 homolog 1</fullName>
        <ecNumber>3.1.-.-</ecNumber>
    </recommendedName>
</protein>
<comment type="alternative products">
    <event type="alternative splicing"/>
    <isoform>
        <id>Q21407-1</id>
        <name>d</name>
        <sequence type="displayed"/>
    </isoform>
    <isoform>
        <id>Q21407-2</id>
        <name>a</name>
        <sequence type="described" ref="VSP_043935"/>
    </isoform>
    <isoform>
        <id>Q21407-3</id>
        <name>b</name>
        <sequence type="described" ref="VSP_043935 VSP_043938 VSP_043939 VSP_043940"/>
    </isoform>
</comment>
<comment type="similarity">
    <text evidence="4">Belongs to the glycerophosphoryl diester phosphodiesterase family.</text>
</comment>
<name>GPCP1_CAEEL</name>
<evidence type="ECO:0000250" key="1">
    <source>
        <dbReference type="UniProtKB" id="Q8C0L9"/>
    </source>
</evidence>
<evidence type="ECO:0000255" key="2">
    <source>
        <dbReference type="PROSITE-ProRule" id="PRU00594"/>
    </source>
</evidence>
<evidence type="ECO:0000256" key="3">
    <source>
        <dbReference type="SAM" id="MobiDB-lite"/>
    </source>
</evidence>
<evidence type="ECO:0000305" key="4"/>
<evidence type="ECO:0000312" key="5">
    <source>
        <dbReference type="WormBase" id="K10B3.6d"/>
    </source>
</evidence>
<proteinExistence type="inferred from homology"/>
<keyword id="KW-0025">Alternative splicing</keyword>
<keyword id="KW-0378">Hydrolase</keyword>
<keyword id="KW-1185">Reference proteome</keyword>